<gene>
    <name evidence="1" type="primary">leuS</name>
    <name type="ordered locus">lmo1660</name>
</gene>
<comment type="catalytic activity">
    <reaction evidence="1">
        <text>tRNA(Leu) + L-leucine + ATP = L-leucyl-tRNA(Leu) + AMP + diphosphate</text>
        <dbReference type="Rhea" id="RHEA:11688"/>
        <dbReference type="Rhea" id="RHEA-COMP:9613"/>
        <dbReference type="Rhea" id="RHEA-COMP:9622"/>
        <dbReference type="ChEBI" id="CHEBI:30616"/>
        <dbReference type="ChEBI" id="CHEBI:33019"/>
        <dbReference type="ChEBI" id="CHEBI:57427"/>
        <dbReference type="ChEBI" id="CHEBI:78442"/>
        <dbReference type="ChEBI" id="CHEBI:78494"/>
        <dbReference type="ChEBI" id="CHEBI:456215"/>
        <dbReference type="EC" id="6.1.1.4"/>
    </reaction>
</comment>
<comment type="subcellular location">
    <subcellularLocation>
        <location evidence="1">Cytoplasm</location>
    </subcellularLocation>
</comment>
<comment type="similarity">
    <text evidence="1">Belongs to the class-I aminoacyl-tRNA synthetase family.</text>
</comment>
<protein>
    <recommendedName>
        <fullName evidence="1">Leucine--tRNA ligase</fullName>
        <ecNumber evidence="1">6.1.1.4</ecNumber>
    </recommendedName>
    <alternativeName>
        <fullName evidence="1">Leucyl-tRNA synthetase</fullName>
        <shortName evidence="1">LeuRS</shortName>
    </alternativeName>
</protein>
<feature type="chain" id="PRO_0000152039" description="Leucine--tRNA ligase">
    <location>
        <begin position="1"/>
        <end position="803"/>
    </location>
</feature>
<feature type="short sequence motif" description="'HIGH' region">
    <location>
        <begin position="40"/>
        <end position="51"/>
    </location>
</feature>
<feature type="short sequence motif" description="'KMSKS' region">
    <location>
        <begin position="575"/>
        <end position="579"/>
    </location>
</feature>
<feature type="binding site" evidence="1">
    <location>
        <position position="578"/>
    </location>
    <ligand>
        <name>ATP</name>
        <dbReference type="ChEBI" id="CHEBI:30616"/>
    </ligand>
</feature>
<proteinExistence type="inferred from homology"/>
<evidence type="ECO:0000255" key="1">
    <source>
        <dbReference type="HAMAP-Rule" id="MF_00049"/>
    </source>
</evidence>
<sequence length="803" mass="91896">MTFNHKKMEPKWQQYWSEHNTFKTTEDKNKENFYALDMFPYPSGAGLHVGHPEGYTATDILSRMKRMQGKNVLHPIGWDAFGLPAEQYAIDTGNDPEEFTALNIANFTRQIKSLGFSYDWDREINTTDPEYYKWTQWIFEKLYENGLAYEAEIAVNWCPALGTVLANEEVIDGKSERGGFPVFRKPMRQWMLKITAYADRLLDDLDLVDWPENIKDMQRNWIGRSEGAEVTFKIKDSDETFNVFTTRPDTLFGATYTVFAPEHELIEKITTPEQKEAVEAYKKQVELKSELERTDLAKDKTGVFTGAYAINPINGEEVPIWIADYVLIQYGTGAIMAVPAHDERDFEFAQQFGLNIRPVLEGGDVTKEAFTGDGPHINSDFLNGLAKAEAITAAIDWLEKEGIGSRKITYRLRDWLFSRQRYWGEPIPVIHWEDGETTLVPEEELPLLLPKATEIKPSGTGESPLANLHDWVNVTDENGRKGRRETNTMPQWAGSSWYFLRYIDPKNSEAIADKEKLAEWLPVDVYIGGAEHAVLHLLYARFWHKFLYDIGVVPTKEPFQKLFNQGMILGENNEKMSKSRGNVVNPDEVVEKYGADTLRLYEMFMGPLEASIAWNENGLEGARKFLDRIWRLLVTEEGTLAEKVTTDANANLEKAYHHMVKTVTNHYENLRFNTGISQLMIFINEAYKQDTIPKQYVEGFVQLLSPIAPHLAEELWEILGHTETISYVAWPTYDETKLVEDEVEIVLQVNGKVKSKITVAKSLGKEELEKIAQEDNKMKENLEGKTIRKVIVVPGKLVNIVAN</sequence>
<name>SYL_LISMO</name>
<dbReference type="EC" id="6.1.1.4" evidence="1"/>
<dbReference type="EMBL" id="AL591980">
    <property type="protein sequence ID" value="CAC99738.1"/>
    <property type="molecule type" value="Genomic_DNA"/>
</dbReference>
<dbReference type="PIR" id="AD1282">
    <property type="entry name" value="AD1282"/>
</dbReference>
<dbReference type="RefSeq" id="NP_465185.1">
    <property type="nucleotide sequence ID" value="NC_003210.1"/>
</dbReference>
<dbReference type="RefSeq" id="WP_010989774.1">
    <property type="nucleotide sequence ID" value="NZ_CP149495.1"/>
</dbReference>
<dbReference type="SMR" id="Q8Y6M4"/>
<dbReference type="STRING" id="169963.gene:17594317"/>
<dbReference type="PaxDb" id="169963-lmo1660"/>
<dbReference type="EnsemblBacteria" id="CAC99738">
    <property type="protein sequence ID" value="CAC99738"/>
    <property type="gene ID" value="CAC99738"/>
</dbReference>
<dbReference type="GeneID" id="985669"/>
<dbReference type="KEGG" id="lmo:lmo1660"/>
<dbReference type="PATRIC" id="fig|169963.11.peg.1702"/>
<dbReference type="eggNOG" id="COG0495">
    <property type="taxonomic scope" value="Bacteria"/>
</dbReference>
<dbReference type="HOGENOM" id="CLU_004427_0_0_9"/>
<dbReference type="OrthoDB" id="9810365at2"/>
<dbReference type="PhylomeDB" id="Q8Y6M4"/>
<dbReference type="BioCyc" id="LMON169963:LMO1660-MONOMER"/>
<dbReference type="Proteomes" id="UP000000817">
    <property type="component" value="Chromosome"/>
</dbReference>
<dbReference type="GO" id="GO:0005829">
    <property type="term" value="C:cytosol"/>
    <property type="evidence" value="ECO:0000318"/>
    <property type="project" value="GO_Central"/>
</dbReference>
<dbReference type="GO" id="GO:0002161">
    <property type="term" value="F:aminoacyl-tRNA deacylase activity"/>
    <property type="evidence" value="ECO:0007669"/>
    <property type="project" value="InterPro"/>
</dbReference>
<dbReference type="GO" id="GO:0005524">
    <property type="term" value="F:ATP binding"/>
    <property type="evidence" value="ECO:0007669"/>
    <property type="project" value="UniProtKB-UniRule"/>
</dbReference>
<dbReference type="GO" id="GO:0004823">
    <property type="term" value="F:leucine-tRNA ligase activity"/>
    <property type="evidence" value="ECO:0000318"/>
    <property type="project" value="GO_Central"/>
</dbReference>
<dbReference type="GO" id="GO:0006429">
    <property type="term" value="P:leucyl-tRNA aminoacylation"/>
    <property type="evidence" value="ECO:0000318"/>
    <property type="project" value="GO_Central"/>
</dbReference>
<dbReference type="CDD" id="cd07958">
    <property type="entry name" value="Anticodon_Ia_Leu_BEm"/>
    <property type="match status" value="1"/>
</dbReference>
<dbReference type="CDD" id="cd00812">
    <property type="entry name" value="LeuRS_core"/>
    <property type="match status" value="1"/>
</dbReference>
<dbReference type="FunFam" id="1.10.730.10:FF:000018">
    <property type="entry name" value="Leucine--tRNA ligase"/>
    <property type="match status" value="1"/>
</dbReference>
<dbReference type="FunFam" id="3.10.20.590:FF:000001">
    <property type="entry name" value="Leucine--tRNA ligase"/>
    <property type="match status" value="1"/>
</dbReference>
<dbReference type="FunFam" id="3.40.50.620:FF:000056">
    <property type="entry name" value="Leucine--tRNA ligase"/>
    <property type="match status" value="1"/>
</dbReference>
<dbReference type="FunFam" id="3.40.50.620:FF:000077">
    <property type="entry name" value="Leucine--tRNA ligase"/>
    <property type="match status" value="1"/>
</dbReference>
<dbReference type="Gene3D" id="3.10.20.590">
    <property type="match status" value="1"/>
</dbReference>
<dbReference type="Gene3D" id="3.40.50.620">
    <property type="entry name" value="HUPs"/>
    <property type="match status" value="2"/>
</dbReference>
<dbReference type="Gene3D" id="1.10.730.10">
    <property type="entry name" value="Isoleucyl-tRNA Synthetase, Domain 1"/>
    <property type="match status" value="1"/>
</dbReference>
<dbReference type="HAMAP" id="MF_00049_B">
    <property type="entry name" value="Leu_tRNA_synth_B"/>
    <property type="match status" value="1"/>
</dbReference>
<dbReference type="InterPro" id="IPR001412">
    <property type="entry name" value="aa-tRNA-synth_I_CS"/>
</dbReference>
<dbReference type="InterPro" id="IPR002300">
    <property type="entry name" value="aa-tRNA-synth_Ia"/>
</dbReference>
<dbReference type="InterPro" id="IPR002302">
    <property type="entry name" value="Leu-tRNA-ligase"/>
</dbReference>
<dbReference type="InterPro" id="IPR025709">
    <property type="entry name" value="Leu_tRNA-synth_edit"/>
</dbReference>
<dbReference type="InterPro" id="IPR013155">
    <property type="entry name" value="M/V/L/I-tRNA-synth_anticd-bd"/>
</dbReference>
<dbReference type="InterPro" id="IPR015413">
    <property type="entry name" value="Methionyl/Leucyl_tRNA_Synth"/>
</dbReference>
<dbReference type="InterPro" id="IPR014729">
    <property type="entry name" value="Rossmann-like_a/b/a_fold"/>
</dbReference>
<dbReference type="InterPro" id="IPR009080">
    <property type="entry name" value="tRNAsynth_Ia_anticodon-bd"/>
</dbReference>
<dbReference type="InterPro" id="IPR009008">
    <property type="entry name" value="Val/Leu/Ile-tRNA-synth_edit"/>
</dbReference>
<dbReference type="NCBIfam" id="TIGR00396">
    <property type="entry name" value="leuS_bact"/>
    <property type="match status" value="1"/>
</dbReference>
<dbReference type="PANTHER" id="PTHR43740:SF2">
    <property type="entry name" value="LEUCINE--TRNA LIGASE, MITOCHONDRIAL"/>
    <property type="match status" value="1"/>
</dbReference>
<dbReference type="PANTHER" id="PTHR43740">
    <property type="entry name" value="LEUCYL-TRNA SYNTHETASE"/>
    <property type="match status" value="1"/>
</dbReference>
<dbReference type="Pfam" id="PF08264">
    <property type="entry name" value="Anticodon_1"/>
    <property type="match status" value="1"/>
</dbReference>
<dbReference type="Pfam" id="PF00133">
    <property type="entry name" value="tRNA-synt_1"/>
    <property type="match status" value="1"/>
</dbReference>
<dbReference type="Pfam" id="PF13603">
    <property type="entry name" value="tRNA-synt_1_2"/>
    <property type="match status" value="1"/>
</dbReference>
<dbReference type="Pfam" id="PF09334">
    <property type="entry name" value="tRNA-synt_1g"/>
    <property type="match status" value="1"/>
</dbReference>
<dbReference type="PRINTS" id="PR00985">
    <property type="entry name" value="TRNASYNTHLEU"/>
</dbReference>
<dbReference type="SUPFAM" id="SSF47323">
    <property type="entry name" value="Anticodon-binding domain of a subclass of class I aminoacyl-tRNA synthetases"/>
    <property type="match status" value="1"/>
</dbReference>
<dbReference type="SUPFAM" id="SSF52374">
    <property type="entry name" value="Nucleotidylyl transferase"/>
    <property type="match status" value="1"/>
</dbReference>
<dbReference type="SUPFAM" id="SSF50677">
    <property type="entry name" value="ValRS/IleRS/LeuRS editing domain"/>
    <property type="match status" value="1"/>
</dbReference>
<dbReference type="PROSITE" id="PS00178">
    <property type="entry name" value="AA_TRNA_LIGASE_I"/>
    <property type="match status" value="1"/>
</dbReference>
<reference key="1">
    <citation type="journal article" date="2001" name="Science">
        <title>Comparative genomics of Listeria species.</title>
        <authorList>
            <person name="Glaser P."/>
            <person name="Frangeul L."/>
            <person name="Buchrieser C."/>
            <person name="Rusniok C."/>
            <person name="Amend A."/>
            <person name="Baquero F."/>
            <person name="Berche P."/>
            <person name="Bloecker H."/>
            <person name="Brandt P."/>
            <person name="Chakraborty T."/>
            <person name="Charbit A."/>
            <person name="Chetouani F."/>
            <person name="Couve E."/>
            <person name="de Daruvar A."/>
            <person name="Dehoux P."/>
            <person name="Domann E."/>
            <person name="Dominguez-Bernal G."/>
            <person name="Duchaud E."/>
            <person name="Durant L."/>
            <person name="Dussurget O."/>
            <person name="Entian K.-D."/>
            <person name="Fsihi H."/>
            <person name="Garcia-del Portillo F."/>
            <person name="Garrido P."/>
            <person name="Gautier L."/>
            <person name="Goebel W."/>
            <person name="Gomez-Lopez N."/>
            <person name="Hain T."/>
            <person name="Hauf J."/>
            <person name="Jackson D."/>
            <person name="Jones L.-M."/>
            <person name="Kaerst U."/>
            <person name="Kreft J."/>
            <person name="Kuhn M."/>
            <person name="Kunst F."/>
            <person name="Kurapkat G."/>
            <person name="Madueno E."/>
            <person name="Maitournam A."/>
            <person name="Mata Vicente J."/>
            <person name="Ng E."/>
            <person name="Nedjari H."/>
            <person name="Nordsiek G."/>
            <person name="Novella S."/>
            <person name="de Pablos B."/>
            <person name="Perez-Diaz J.-C."/>
            <person name="Purcell R."/>
            <person name="Remmel B."/>
            <person name="Rose M."/>
            <person name="Schlueter T."/>
            <person name="Simoes N."/>
            <person name="Tierrez A."/>
            <person name="Vazquez-Boland J.-A."/>
            <person name="Voss H."/>
            <person name="Wehland J."/>
            <person name="Cossart P."/>
        </authorList>
    </citation>
    <scope>NUCLEOTIDE SEQUENCE [LARGE SCALE GENOMIC DNA]</scope>
    <source>
        <strain>ATCC BAA-679 / EGD-e</strain>
    </source>
</reference>
<accession>Q8Y6M4</accession>
<keyword id="KW-0030">Aminoacyl-tRNA synthetase</keyword>
<keyword id="KW-0067">ATP-binding</keyword>
<keyword id="KW-0963">Cytoplasm</keyword>
<keyword id="KW-0436">Ligase</keyword>
<keyword id="KW-0547">Nucleotide-binding</keyword>
<keyword id="KW-0648">Protein biosynthesis</keyword>
<keyword id="KW-1185">Reference proteome</keyword>
<organism>
    <name type="scientific">Listeria monocytogenes serovar 1/2a (strain ATCC BAA-679 / EGD-e)</name>
    <dbReference type="NCBI Taxonomy" id="169963"/>
    <lineage>
        <taxon>Bacteria</taxon>
        <taxon>Bacillati</taxon>
        <taxon>Bacillota</taxon>
        <taxon>Bacilli</taxon>
        <taxon>Bacillales</taxon>
        <taxon>Listeriaceae</taxon>
        <taxon>Listeria</taxon>
    </lineage>
</organism>